<keyword id="KW-0479">Metal-binding</keyword>
<keyword id="KW-1185">Reference proteome</keyword>
<keyword id="KW-0677">Repeat</keyword>
<keyword id="KW-0804">Transcription</keyword>
<keyword id="KW-0805">Transcription regulation</keyword>
<keyword id="KW-0862">Zinc</keyword>
<keyword id="KW-0863">Zinc-finger</keyword>
<accession>Q2NEL6</accession>
<reference key="1">
    <citation type="journal article" date="2006" name="J. Bacteriol.">
        <title>The genome sequence of Methanosphaera stadtmanae reveals why this human intestinal archaeon is restricted to methanol and H2 for methane formation and ATP synthesis.</title>
        <authorList>
            <person name="Fricke W.F."/>
            <person name="Seedorf H."/>
            <person name="Henne A."/>
            <person name="Kruer M."/>
            <person name="Liesegang H."/>
            <person name="Hedderich R."/>
            <person name="Gottschalk G."/>
            <person name="Thauer R.K."/>
        </authorList>
    </citation>
    <scope>NUCLEOTIDE SEQUENCE [LARGE SCALE GENOMIC DNA]</scope>
    <source>
        <strain>ATCC 43021 / DSM 3091 / JCM 11832 / MCB-3</strain>
    </source>
</reference>
<proteinExistence type="inferred from homology"/>
<gene>
    <name evidence="1" type="primary">tfb</name>
    <name type="ordered locus">Msp_1360</name>
</gene>
<organism>
    <name type="scientific">Methanosphaera stadtmanae (strain ATCC 43021 / DSM 3091 / JCM 11832 / MCB-3)</name>
    <dbReference type="NCBI Taxonomy" id="339860"/>
    <lineage>
        <taxon>Archaea</taxon>
        <taxon>Methanobacteriati</taxon>
        <taxon>Methanobacteriota</taxon>
        <taxon>Methanomada group</taxon>
        <taxon>Methanobacteria</taxon>
        <taxon>Methanobacteriales</taxon>
        <taxon>Methanobacteriaceae</taxon>
        <taxon>Methanosphaera</taxon>
    </lineage>
</organism>
<dbReference type="EMBL" id="CP000102">
    <property type="protein sequence ID" value="ABC57737.1"/>
    <property type="molecule type" value="Genomic_DNA"/>
</dbReference>
<dbReference type="RefSeq" id="WP_011406936.1">
    <property type="nucleotide sequence ID" value="NC_007681.1"/>
</dbReference>
<dbReference type="SMR" id="Q2NEL6"/>
<dbReference type="STRING" id="339860.Msp_1360"/>
<dbReference type="KEGG" id="mst:Msp_1360"/>
<dbReference type="eggNOG" id="arCOG01981">
    <property type="taxonomic scope" value="Archaea"/>
</dbReference>
<dbReference type="HOGENOM" id="CLU_043736_0_1_2"/>
<dbReference type="OrthoDB" id="7429at2157"/>
<dbReference type="Proteomes" id="UP000001931">
    <property type="component" value="Chromosome"/>
</dbReference>
<dbReference type="GO" id="GO:0097550">
    <property type="term" value="C:transcription preinitiation complex"/>
    <property type="evidence" value="ECO:0007669"/>
    <property type="project" value="TreeGrafter"/>
</dbReference>
<dbReference type="GO" id="GO:0003700">
    <property type="term" value="F:DNA-binding transcription factor activity"/>
    <property type="evidence" value="ECO:0007669"/>
    <property type="project" value="UniProtKB-UniRule"/>
</dbReference>
<dbReference type="GO" id="GO:0017025">
    <property type="term" value="F:TBP-class protein binding"/>
    <property type="evidence" value="ECO:0007669"/>
    <property type="project" value="InterPro"/>
</dbReference>
<dbReference type="GO" id="GO:0008270">
    <property type="term" value="F:zinc ion binding"/>
    <property type="evidence" value="ECO:0007669"/>
    <property type="project" value="UniProtKB-UniRule"/>
</dbReference>
<dbReference type="GO" id="GO:0070897">
    <property type="term" value="P:transcription preinitiation complex assembly"/>
    <property type="evidence" value="ECO:0007669"/>
    <property type="project" value="InterPro"/>
</dbReference>
<dbReference type="CDD" id="cd20549">
    <property type="entry name" value="CYCLIN_TFIIB_archaea_like_rpt1"/>
    <property type="match status" value="1"/>
</dbReference>
<dbReference type="CDD" id="cd20550">
    <property type="entry name" value="CYCLIN_TFIIB_archaea_like_rpt2"/>
    <property type="match status" value="1"/>
</dbReference>
<dbReference type="FunFam" id="1.10.472.10:FF:000023">
    <property type="entry name" value="Transcription initiation factor IIB"/>
    <property type="match status" value="1"/>
</dbReference>
<dbReference type="FunFam" id="1.10.472.170:FF:000001">
    <property type="entry name" value="Transcription initiation factor IIB"/>
    <property type="match status" value="1"/>
</dbReference>
<dbReference type="Gene3D" id="1.10.472.170">
    <property type="match status" value="1"/>
</dbReference>
<dbReference type="Gene3D" id="1.10.472.10">
    <property type="entry name" value="Cyclin-like"/>
    <property type="match status" value="1"/>
</dbReference>
<dbReference type="HAMAP" id="MF_00383">
    <property type="entry name" value="TF2B_arch"/>
    <property type="match status" value="1"/>
</dbReference>
<dbReference type="InterPro" id="IPR013763">
    <property type="entry name" value="Cyclin-like_dom"/>
</dbReference>
<dbReference type="InterPro" id="IPR036915">
    <property type="entry name" value="Cyclin-like_sf"/>
</dbReference>
<dbReference type="InterPro" id="IPR000812">
    <property type="entry name" value="TFIIB"/>
</dbReference>
<dbReference type="InterPro" id="IPR023484">
    <property type="entry name" value="TFIIB_arc"/>
</dbReference>
<dbReference type="InterPro" id="IPR023486">
    <property type="entry name" value="TFIIB_CS"/>
</dbReference>
<dbReference type="InterPro" id="IPR013150">
    <property type="entry name" value="TFIIB_cyclin"/>
</dbReference>
<dbReference type="InterPro" id="IPR013137">
    <property type="entry name" value="Znf_TFIIB"/>
</dbReference>
<dbReference type="NCBIfam" id="NF001658">
    <property type="entry name" value="PRK00423.1"/>
    <property type="match status" value="1"/>
</dbReference>
<dbReference type="PANTHER" id="PTHR11618:SF13">
    <property type="entry name" value="TRANSCRIPTION INITIATION FACTOR IIB"/>
    <property type="match status" value="1"/>
</dbReference>
<dbReference type="PANTHER" id="PTHR11618">
    <property type="entry name" value="TRANSCRIPTION INITIATION FACTOR IIB-RELATED"/>
    <property type="match status" value="1"/>
</dbReference>
<dbReference type="Pfam" id="PF00382">
    <property type="entry name" value="TFIIB"/>
    <property type="match status" value="2"/>
</dbReference>
<dbReference type="Pfam" id="PF08271">
    <property type="entry name" value="Zn_Ribbon_TF"/>
    <property type="match status" value="1"/>
</dbReference>
<dbReference type="PRINTS" id="PR00685">
    <property type="entry name" value="TIFACTORIIB"/>
</dbReference>
<dbReference type="SMART" id="SM00385">
    <property type="entry name" value="CYCLIN"/>
    <property type="match status" value="2"/>
</dbReference>
<dbReference type="SUPFAM" id="SSF47954">
    <property type="entry name" value="Cyclin-like"/>
    <property type="match status" value="2"/>
</dbReference>
<dbReference type="SUPFAM" id="SSF57783">
    <property type="entry name" value="Zinc beta-ribbon"/>
    <property type="match status" value="1"/>
</dbReference>
<dbReference type="PROSITE" id="PS00782">
    <property type="entry name" value="TFIIB"/>
    <property type="match status" value="2"/>
</dbReference>
<dbReference type="PROSITE" id="PS51134">
    <property type="entry name" value="ZF_TFIIB"/>
    <property type="match status" value="1"/>
</dbReference>
<protein>
    <recommendedName>
        <fullName evidence="1">Transcription initiation factor IIB</fullName>
        <shortName evidence="1">TFIIB</shortName>
    </recommendedName>
</protein>
<evidence type="ECO:0000255" key="1">
    <source>
        <dbReference type="HAMAP-Rule" id="MF_00383"/>
    </source>
</evidence>
<evidence type="ECO:0000255" key="2">
    <source>
        <dbReference type="PROSITE-ProRule" id="PRU00469"/>
    </source>
</evidence>
<name>TF2B_METST</name>
<feature type="chain" id="PRO_1000080113" description="Transcription initiation factor IIB">
    <location>
        <begin position="1"/>
        <end position="311"/>
    </location>
</feature>
<feature type="repeat" description="1">
    <location>
        <begin position="128"/>
        <end position="211"/>
    </location>
</feature>
<feature type="repeat" description="2">
    <location>
        <begin position="222"/>
        <end position="303"/>
    </location>
</feature>
<feature type="zinc finger region" description="TFIIB-type" evidence="2">
    <location>
        <begin position="11"/>
        <end position="42"/>
    </location>
</feature>
<feature type="binding site" evidence="2">
    <location>
        <position position="15"/>
    </location>
    <ligand>
        <name>Zn(2+)</name>
        <dbReference type="ChEBI" id="CHEBI:29105"/>
    </ligand>
</feature>
<feature type="binding site" evidence="2">
    <location>
        <position position="18"/>
    </location>
    <ligand>
        <name>Zn(2+)</name>
        <dbReference type="ChEBI" id="CHEBI:29105"/>
    </ligand>
</feature>
<feature type="binding site" evidence="2">
    <location>
        <position position="34"/>
    </location>
    <ligand>
        <name>Zn(2+)</name>
        <dbReference type="ChEBI" id="CHEBI:29105"/>
    </ligand>
</feature>
<feature type="binding site" evidence="2">
    <location>
        <position position="37"/>
    </location>
    <ligand>
        <name>Zn(2+)</name>
        <dbReference type="ChEBI" id="CHEBI:29105"/>
    </ligand>
</feature>
<sequence length="311" mass="35016">MKEDVAEMEKKETKCPECGSTKLINDHERGEVVCGACGLVIDDNIVDMGPEWRAFDHEQRDKRTRVGAPITYTIHDKGLSTMIDWRNKDIYGRDIPARNRAQWYRLRKWQRKIRISGATERNLAFALSELDRDSSRLGLPRSVRESASVVYRNAVENKLIRGRSIEGVVAASLYAACRRCKVPRTLDEIADVSRVSKKEVGRTYRFLTRELHIRLPPTSPIDYVPRFASELNLSGVVQSKAIEIINQAMDNGLTSGRGPTGVAAAALYIASVLLGERKTQRDVADIAGVTEVTIRNRYKELTEQLDMGVNL</sequence>
<comment type="function">
    <text evidence="1">Stabilizes TBP binding to an archaeal box-A promoter. Also responsible for recruiting RNA polymerase II to the pre-initiation complex (DNA-TBP-TFIIB).</text>
</comment>
<comment type="similarity">
    <text evidence="1">Belongs to the TFIIB family.</text>
</comment>